<reference key="1">
    <citation type="journal article" date="1993" name="Biochim. Biophys. Acta">
        <title>Luciferase from the east European firefly Luciola mingrelica: cloning and nucleotide sequence of the cDNA, overexpression in Escherichia coli and purification of the enzyme.</title>
        <authorList>
            <person name="Devine J.H."/>
            <person name="Kutuzova G.D."/>
            <person name="Green V.A."/>
            <person name="Ugarova N.N."/>
            <person name="Baldwin T.O."/>
        </authorList>
    </citation>
    <scope>NUCLEOTIDE SEQUENCE [MRNA]</scope>
</reference>
<reference key="2">
    <citation type="journal article" date="1981" name="Dokl. Akad. Nauk SSSR">
        <title>Dimers as catalytically active particles of firefly luciferase.</title>
        <authorList>
            <person name="Ugarova N.N."/>
            <person name="Brovko L. Jr."/>
            <person name="Belyayeva E.I."/>
            <person name="Philippova N. Jr."/>
            <person name="Berezin I.V."/>
        </authorList>
    </citation>
    <scope>SUBUNIT</scope>
</reference>
<reference key="3">
    <citation type="journal article" date="1989" name="J. Biolumin. Chemilumin.">
        <title>Luciferase of Luciola mingrelica fireflies. Kinetics and regulation mechanism.</title>
        <authorList>
            <person name="Ugarova N.N."/>
        </authorList>
    </citation>
    <scope>FUNCTION</scope>
    <scope>CATALYTIC ACTIVITY</scope>
    <scope>ACTIVITY REGULATION</scope>
    <scope>BIOPHYSICOCHEMICAL PROPERTIES</scope>
</reference>
<protein>
    <recommendedName>
        <fullName>Luciferin 4-monooxygenase</fullName>
        <shortName>Luciferase</shortName>
        <ecNumber evidence="3">1.13.12.7</ecNumber>
    </recommendedName>
</protein>
<keyword id="KW-0067">ATP-binding</keyword>
<keyword id="KW-0455">Luminescence</keyword>
<keyword id="KW-0460">Magnesium</keyword>
<keyword id="KW-0479">Metal-binding</keyword>
<keyword id="KW-0503">Monooxygenase</keyword>
<keyword id="KW-0547">Nucleotide-binding</keyword>
<keyword id="KW-0560">Oxidoreductase</keyword>
<keyword id="KW-0576">Peroxisome</keyword>
<keyword id="KW-0599">Photoprotein</keyword>
<feature type="chain" id="PRO_0000193145" description="Luciferin 4-monooxygenase">
    <location>
        <begin position="1"/>
        <end position="548"/>
    </location>
</feature>
<feature type="short sequence motif" description="Microbody targeting signal" evidence="2">
    <location>
        <begin position="546"/>
        <end position="548"/>
    </location>
</feature>
<organism>
    <name type="scientific">Luciola mingrelica</name>
    <name type="common">Southern Russian firefly</name>
    <dbReference type="NCBI Taxonomy" id="27446"/>
    <lineage>
        <taxon>Eukaryota</taxon>
        <taxon>Metazoa</taxon>
        <taxon>Ecdysozoa</taxon>
        <taxon>Arthropoda</taxon>
        <taxon>Hexapoda</taxon>
        <taxon>Insecta</taxon>
        <taxon>Pterygota</taxon>
        <taxon>Neoptera</taxon>
        <taxon>Endopterygota</taxon>
        <taxon>Coleoptera</taxon>
        <taxon>Polyphaga</taxon>
        <taxon>Elateriformia</taxon>
        <taxon>Elateroidea</taxon>
        <taxon>Lampyridae</taxon>
        <taxon>Luciolinae</taxon>
        <taxon>Luciola</taxon>
    </lineage>
</organism>
<proteinExistence type="evidence at protein level"/>
<accession>Q26304</accession>
<sequence length="548" mass="60495">MEMEKEENVVYGPLPFYPIEEGSAGIQLHKYMHQYAKLGAIAFSNALTGVDISYQEYFDITCRLAEAMKNFGMKPEEHIALCSENCEEFFIPVLAGLYIGVAVAPTNEIYTLRELNHSLGIAQPTIVFSSRKGLPKVLEVQKTVTCIKKIVILDSKVNFGGHDCMETFIKKHVELGFQPSSFVPIDVKNRKQHVALLMNSSGSTGLPKGVRITHEGAVTRFSHAKDPIYGNQVSPGTAILTVVPFHHGFGMFTTLGYFACGYRVVMLTKFDEELFLRTLQDYKCTSVILVPTLFAILNKSELIDKFDLSNLTEIASGGAPLAKEVGEAVARRFNLPGVRQGYGLTETTSAFIITPEGDDKPGASGKVVPLFKVKVIDLDTKKTLGVNRRGEICVKGPSLMLGYSNNPEATRETIDEEGWLHTGDIGYYDEDEHFFIVDRLKSLIKYKGYQVPPAELESVLLQHPNIFDAGVAGVPDPDAGELPGAVVVMEKGKTMTEKEIVDYVNSQVVNHKRLRGGVRFVDEVPKGLTGKIDAKVIREILKKPQAKM</sequence>
<name>LUCI_LUCMI</name>
<evidence type="ECO:0000250" key="1"/>
<evidence type="ECO:0000255" key="2"/>
<evidence type="ECO:0000269" key="3">
    <source>
    </source>
</evidence>
<evidence type="ECO:0000269" key="4">
    <source ref="2"/>
</evidence>
<comment type="function">
    <text evidence="3">Produces green light with a wavelength of 570 nm.</text>
</comment>
<comment type="catalytic activity">
    <reaction evidence="3">
        <text>firefly D-luciferin + ATP + O2 = firefly oxyluciferin + hnu + AMP + CO2 + diphosphate</text>
        <dbReference type="Rhea" id="RHEA:10732"/>
        <dbReference type="ChEBI" id="CHEBI:15379"/>
        <dbReference type="ChEBI" id="CHEBI:16526"/>
        <dbReference type="ChEBI" id="CHEBI:16792"/>
        <dbReference type="ChEBI" id="CHEBI:30212"/>
        <dbReference type="ChEBI" id="CHEBI:30616"/>
        <dbReference type="ChEBI" id="CHEBI:33019"/>
        <dbReference type="ChEBI" id="CHEBI:58038"/>
        <dbReference type="ChEBI" id="CHEBI:456215"/>
        <dbReference type="EC" id="1.13.12.7"/>
    </reaction>
</comment>
<comment type="cofactor">
    <cofactor>
        <name>Mg(2+)</name>
        <dbReference type="ChEBI" id="CHEBI:18420"/>
    </cofactor>
</comment>
<comment type="activity regulation">
    <text evidence="3">Inhibited by ATP analogs and sodium deoxycholate. Activated by choline-containing phospholipids.</text>
</comment>
<comment type="biophysicochemical properties">
    <kinetics>
        <KM evidence="3">11.5 uM for luciferin</KM>
        <KM evidence="3">130 uM for ATP</KM>
    </kinetics>
    <phDependence>
        <text evidence="3">Optimum pH is 7.7.</text>
    </phDependence>
</comment>
<comment type="subunit">
    <text evidence="4">Homodimer.</text>
</comment>
<comment type="subcellular location">
    <subcellularLocation>
        <location evidence="1">Peroxisome</location>
    </subcellularLocation>
</comment>
<comment type="similarity">
    <text evidence="2">Belongs to the ATP-dependent AMP-binding enzyme family.</text>
</comment>
<dbReference type="EC" id="1.13.12.7" evidence="3"/>
<dbReference type="EMBL" id="S61961">
    <property type="protein sequence ID" value="AAB26932.1"/>
    <property type="molecule type" value="mRNA"/>
</dbReference>
<dbReference type="PIR" id="S33788">
    <property type="entry name" value="S33788"/>
</dbReference>
<dbReference type="SMR" id="Q26304"/>
<dbReference type="BindingDB" id="Q26304"/>
<dbReference type="KEGG" id="ag:AAB26932"/>
<dbReference type="BioCyc" id="MetaCyc:MONOMER-16916"/>
<dbReference type="BRENDA" id="1.13.12.7">
    <property type="organism ID" value="3082"/>
</dbReference>
<dbReference type="GO" id="GO:0005777">
    <property type="term" value="C:peroxisome"/>
    <property type="evidence" value="ECO:0000250"/>
    <property type="project" value="UniProtKB"/>
</dbReference>
<dbReference type="GO" id="GO:0005524">
    <property type="term" value="F:ATP binding"/>
    <property type="evidence" value="ECO:0007669"/>
    <property type="project" value="UniProtKB-KW"/>
</dbReference>
<dbReference type="GO" id="GO:0016405">
    <property type="term" value="F:CoA-ligase activity"/>
    <property type="evidence" value="ECO:0007669"/>
    <property type="project" value="TreeGrafter"/>
</dbReference>
<dbReference type="GO" id="GO:0000287">
    <property type="term" value="F:magnesium ion binding"/>
    <property type="evidence" value="ECO:0000314"/>
    <property type="project" value="UniProtKB"/>
</dbReference>
<dbReference type="GO" id="GO:0047077">
    <property type="term" value="F:Photinus-luciferin 4-monooxygenase (ATP-hydrolyzing) activity"/>
    <property type="evidence" value="ECO:0000314"/>
    <property type="project" value="UniProtKB"/>
</dbReference>
<dbReference type="GO" id="GO:0008218">
    <property type="term" value="P:bioluminescence"/>
    <property type="evidence" value="ECO:0000314"/>
    <property type="project" value="UniProtKB"/>
</dbReference>
<dbReference type="CDD" id="cd17642">
    <property type="entry name" value="Firefly_Luc"/>
    <property type="match status" value="1"/>
</dbReference>
<dbReference type="FunFam" id="3.30.300.30:FF:000007">
    <property type="entry name" value="4-coumarate--CoA ligase 2"/>
    <property type="match status" value="1"/>
</dbReference>
<dbReference type="FunFam" id="3.40.50.12780:FF:000003">
    <property type="entry name" value="Long-chain-fatty-acid--CoA ligase FadD"/>
    <property type="match status" value="1"/>
</dbReference>
<dbReference type="FunFam" id="2.30.38.10:FF:000005">
    <property type="entry name" value="Luciferin 4-monooxygenase"/>
    <property type="match status" value="1"/>
</dbReference>
<dbReference type="Gene3D" id="3.30.300.30">
    <property type="match status" value="1"/>
</dbReference>
<dbReference type="Gene3D" id="3.40.50.980">
    <property type="match status" value="2"/>
</dbReference>
<dbReference type="Gene3D" id="2.30.38.10">
    <property type="entry name" value="Luciferase, Domain 3"/>
    <property type="match status" value="1"/>
</dbReference>
<dbReference type="InterPro" id="IPR025110">
    <property type="entry name" value="AMP-bd_C"/>
</dbReference>
<dbReference type="InterPro" id="IPR045851">
    <property type="entry name" value="AMP-bd_C_sf"/>
</dbReference>
<dbReference type="InterPro" id="IPR020845">
    <property type="entry name" value="AMP-binding_CS"/>
</dbReference>
<dbReference type="InterPro" id="IPR000873">
    <property type="entry name" value="AMP-dep_synth/lig_dom"/>
</dbReference>
<dbReference type="PANTHER" id="PTHR24096:SF423">
    <property type="entry name" value="GM05240P"/>
    <property type="match status" value="1"/>
</dbReference>
<dbReference type="PANTHER" id="PTHR24096">
    <property type="entry name" value="LONG-CHAIN-FATTY-ACID--COA LIGASE"/>
    <property type="match status" value="1"/>
</dbReference>
<dbReference type="Pfam" id="PF00501">
    <property type="entry name" value="AMP-binding"/>
    <property type="match status" value="1"/>
</dbReference>
<dbReference type="Pfam" id="PF13193">
    <property type="entry name" value="AMP-binding_C"/>
    <property type="match status" value="1"/>
</dbReference>
<dbReference type="SUPFAM" id="SSF56801">
    <property type="entry name" value="Acetyl-CoA synthetase-like"/>
    <property type="match status" value="1"/>
</dbReference>
<dbReference type="PROSITE" id="PS00455">
    <property type="entry name" value="AMP_BINDING"/>
    <property type="match status" value="1"/>
</dbReference>